<protein>
    <recommendedName>
        <fullName evidence="1">SANT and BTB domain regulator of class switch recombination</fullName>
        <shortName evidence="8">SANT and BTB domain regulator of CSR</shortName>
    </recommendedName>
</protein>
<gene>
    <name evidence="8" type="primary">Sanbr</name>
    <name type="synonym">Kiaa1841</name>
</gene>
<proteinExistence type="evidence at protein level"/>
<dbReference type="EMBL" id="AK129454">
    <property type="protein sequence ID" value="BAC98264.1"/>
    <property type="status" value="ALT_INIT"/>
    <property type="molecule type" value="mRNA"/>
</dbReference>
<dbReference type="EMBL" id="AL672049">
    <property type="protein sequence ID" value="CAM16941.1"/>
    <property type="status" value="ALT_SEQ"/>
    <property type="molecule type" value="Genomic_DNA"/>
</dbReference>
<dbReference type="EMBL" id="AL672049">
    <property type="protein sequence ID" value="CAM16942.1"/>
    <property type="molecule type" value="Genomic_DNA"/>
</dbReference>
<dbReference type="EMBL" id="AL672049">
    <property type="protein sequence ID" value="CAM16943.1"/>
    <property type="status" value="ALT_SEQ"/>
    <property type="molecule type" value="Genomic_DNA"/>
</dbReference>
<dbReference type="EMBL" id="AL672049">
    <property type="protein sequence ID" value="CAM16945.1"/>
    <property type="molecule type" value="Genomic_DNA"/>
</dbReference>
<dbReference type="EMBL" id="AL672049">
    <property type="protein sequence ID" value="CAM16946.1"/>
    <property type="status" value="ALT_SEQ"/>
    <property type="molecule type" value="Genomic_DNA"/>
</dbReference>
<dbReference type="EMBL" id="BC072622">
    <property type="protein sequence ID" value="AAH72622.1"/>
    <property type="status" value="ALT_FRAME"/>
    <property type="molecule type" value="mRNA"/>
</dbReference>
<dbReference type="EMBL" id="BC079876">
    <property type="protein sequence ID" value="AAH79876.1"/>
    <property type="molecule type" value="mRNA"/>
</dbReference>
<dbReference type="EMBL" id="AK002465">
    <property type="protein sequence ID" value="BAB22119.1"/>
    <property type="molecule type" value="mRNA"/>
</dbReference>
<dbReference type="EMBL" id="AK053838">
    <property type="protein sequence ID" value="BAC35550.1"/>
    <property type="molecule type" value="mRNA"/>
</dbReference>
<dbReference type="EMBL" id="AK142320">
    <property type="protein sequence ID" value="BAE25029.1"/>
    <property type="molecule type" value="mRNA"/>
</dbReference>
<dbReference type="CCDS" id="CCDS36119.1">
    <molecule id="Q68FF0-1"/>
</dbReference>
<dbReference type="CCDS" id="CCDS88137.1">
    <molecule id="Q68FF0-2"/>
</dbReference>
<dbReference type="RefSeq" id="NP_001334171.1">
    <molecule id="Q68FF0-2"/>
    <property type="nucleotide sequence ID" value="NM_001347242.1"/>
</dbReference>
<dbReference type="RefSeq" id="NP_082136.2">
    <molecule id="Q68FF0-1"/>
    <property type="nucleotide sequence ID" value="NM_027860.3"/>
</dbReference>
<dbReference type="RefSeq" id="XP_006514870.1">
    <property type="nucleotide sequence ID" value="XM_006514807.3"/>
</dbReference>
<dbReference type="RefSeq" id="XP_006514871.1">
    <molecule id="Q68FF0-1"/>
    <property type="nucleotide sequence ID" value="XM_006514808.4"/>
</dbReference>
<dbReference type="RefSeq" id="XP_011242051.1">
    <molecule id="Q68FF0-1"/>
    <property type="nucleotide sequence ID" value="XM_011243749.3"/>
</dbReference>
<dbReference type="RefSeq" id="XP_017170257.1">
    <molecule id="Q68FF0-1"/>
    <property type="nucleotide sequence ID" value="XM_017314768.3"/>
</dbReference>
<dbReference type="RefSeq" id="XP_017170259.1">
    <property type="nucleotide sequence ID" value="XM_017314770.1"/>
</dbReference>
<dbReference type="RefSeq" id="XP_030102187.1">
    <molecule id="Q68FF0-1"/>
    <property type="nucleotide sequence ID" value="XM_030246327.1"/>
</dbReference>
<dbReference type="RefSeq" id="XP_030102189.1">
    <molecule id="Q68FF0-2"/>
    <property type="nucleotide sequence ID" value="XM_030246329.1"/>
</dbReference>
<dbReference type="SMR" id="Q68FF0"/>
<dbReference type="BioGRID" id="214847">
    <property type="interactions" value="1"/>
</dbReference>
<dbReference type="FunCoup" id="Q68FF0">
    <property type="interactions" value="133"/>
</dbReference>
<dbReference type="STRING" id="10090.ENSMUSP00000044265"/>
<dbReference type="iPTMnet" id="Q68FF0"/>
<dbReference type="PhosphoSitePlus" id="Q68FF0"/>
<dbReference type="PaxDb" id="10090-ENSMUSP00000044265"/>
<dbReference type="ProteomicsDB" id="269132">
    <molecule id="Q68FF0-1"/>
</dbReference>
<dbReference type="ProteomicsDB" id="269133">
    <molecule id="Q68FF0-2"/>
</dbReference>
<dbReference type="Antibodypedia" id="30587">
    <property type="antibodies" value="50 antibodies from 12 providers"/>
</dbReference>
<dbReference type="Ensembl" id="ENSMUST00000043356.13">
    <molecule id="Q68FF0-1"/>
    <property type="protein sequence ID" value="ENSMUSP00000044265.7"/>
    <property type="gene ID" value="ENSMUSG00000042208.17"/>
</dbReference>
<dbReference type="Ensembl" id="ENSMUST00000093267.11">
    <molecule id="Q68FF0-2"/>
    <property type="protein sequence ID" value="ENSMUSP00000090955.5"/>
    <property type="gene ID" value="ENSMUSG00000042208.17"/>
</dbReference>
<dbReference type="Ensembl" id="ENSMUST00000180260.8">
    <molecule id="Q68FF0-1"/>
    <property type="protein sequence ID" value="ENSMUSP00000136118.2"/>
    <property type="gene ID" value="ENSMUSG00000042208.17"/>
</dbReference>
<dbReference type="GeneID" id="71675"/>
<dbReference type="KEGG" id="mmu:71675"/>
<dbReference type="UCSC" id="uc007ifh.1">
    <molecule id="Q68FF0-1"/>
    <property type="organism name" value="mouse"/>
</dbReference>
<dbReference type="AGR" id="MGI:1918925"/>
<dbReference type="CTD" id="84542"/>
<dbReference type="MGI" id="MGI:1918925">
    <property type="gene designation" value="Sanbr"/>
</dbReference>
<dbReference type="VEuPathDB" id="HostDB:ENSMUSG00000042208"/>
<dbReference type="eggNOG" id="ENOG502QRE4">
    <property type="taxonomic scope" value="Eukaryota"/>
</dbReference>
<dbReference type="GeneTree" id="ENSGT00390000008178"/>
<dbReference type="HOGENOM" id="CLU_016494_0_0_1"/>
<dbReference type="InParanoid" id="Q68FF0"/>
<dbReference type="OMA" id="CHQAFLC"/>
<dbReference type="OrthoDB" id="550012at2759"/>
<dbReference type="PhylomeDB" id="Q68FF0"/>
<dbReference type="TreeFam" id="TF324503"/>
<dbReference type="BioGRID-ORCS" id="71675">
    <property type="hits" value="3 hits in 77 CRISPR screens"/>
</dbReference>
<dbReference type="ChiTaRS" id="0610010F05Rik">
    <property type="organism name" value="mouse"/>
</dbReference>
<dbReference type="PRO" id="PR:Q68FF0"/>
<dbReference type="Proteomes" id="UP000000589">
    <property type="component" value="Chromosome 11"/>
</dbReference>
<dbReference type="RNAct" id="Q68FF0">
    <property type="molecule type" value="protein"/>
</dbReference>
<dbReference type="Bgee" id="ENSMUSG00000042208">
    <property type="expression patterns" value="Expressed in trigeminal ganglion and 237 other cell types or tissues"/>
</dbReference>
<dbReference type="ExpressionAtlas" id="Q68FF0">
    <property type="expression patterns" value="baseline and differential"/>
</dbReference>
<dbReference type="GO" id="GO:0042802">
    <property type="term" value="F:identical protein binding"/>
    <property type="evidence" value="ECO:0000314"/>
    <property type="project" value="UniProtKB"/>
</dbReference>
<dbReference type="GO" id="GO:0045190">
    <property type="term" value="P:isotype switching"/>
    <property type="evidence" value="ECO:0000314"/>
    <property type="project" value="UniProtKB"/>
</dbReference>
<dbReference type="CDD" id="cd00167">
    <property type="entry name" value="SANT"/>
    <property type="match status" value="1"/>
</dbReference>
<dbReference type="Gene3D" id="3.30.710.10">
    <property type="entry name" value="Potassium Channel Kv1.1, Chain A"/>
    <property type="match status" value="1"/>
</dbReference>
<dbReference type="InterPro" id="IPR045902">
    <property type="entry name" value="SANBR-like"/>
</dbReference>
<dbReference type="InterPro" id="IPR021777">
    <property type="entry name" value="SANBR_BTB"/>
</dbReference>
<dbReference type="InterPro" id="IPR001005">
    <property type="entry name" value="SANT/Myb"/>
</dbReference>
<dbReference type="InterPro" id="IPR011333">
    <property type="entry name" value="SKP1/BTB/POZ_sf"/>
</dbReference>
<dbReference type="PANTHER" id="PTHR20946">
    <property type="entry name" value="SANT AND BTB DOMAIN REGULATOR OF CLASS SWITCH RECOMBINATION"/>
    <property type="match status" value="1"/>
</dbReference>
<dbReference type="PANTHER" id="PTHR20946:SF0">
    <property type="entry name" value="SANT AND BTB DOMAIN REGULATOR OF CLASS SWITCH RECOMBINATION"/>
    <property type="match status" value="1"/>
</dbReference>
<dbReference type="Pfam" id="PF11822">
    <property type="entry name" value="BTB_SANBR"/>
    <property type="match status" value="1"/>
</dbReference>
<feature type="chain" id="PRO_0000324599" description="SANT and BTB domain regulator of class switch recombination">
    <location>
        <begin position="1"/>
        <end position="718"/>
    </location>
</feature>
<feature type="domain" description="SANT" evidence="3">
    <location>
        <begin position="21"/>
        <end position="59"/>
    </location>
</feature>
<feature type="domain" description="BTB" evidence="2">
    <location>
        <begin position="147"/>
        <end position="255"/>
    </location>
</feature>
<feature type="region of interest" description="Disordered" evidence="4">
    <location>
        <begin position="555"/>
        <end position="622"/>
    </location>
</feature>
<feature type="region of interest" description="Disordered" evidence="4">
    <location>
        <begin position="690"/>
        <end position="718"/>
    </location>
</feature>
<feature type="compositionally biased region" description="Acidic residues" evidence="4">
    <location>
        <begin position="555"/>
        <end position="576"/>
    </location>
</feature>
<feature type="compositionally biased region" description="Basic residues" evidence="4">
    <location>
        <begin position="580"/>
        <end position="595"/>
    </location>
</feature>
<feature type="compositionally biased region" description="Basic and acidic residues" evidence="4">
    <location>
        <begin position="604"/>
        <end position="615"/>
    </location>
</feature>
<feature type="splice variant" id="VSP_032303" description="In isoform 2." evidence="6">
    <location>
        <begin position="1"/>
        <end position="146"/>
    </location>
</feature>
<feature type="sequence conflict" description="In Ref. 4; BAC35550." evidence="7" ref="4">
    <original>I</original>
    <variation>V</variation>
    <location>
        <position position="149"/>
    </location>
</feature>
<feature type="sequence conflict" description="In Ref. 3; AAH79876." evidence="7" ref="3">
    <original>I</original>
    <variation>L</variation>
    <location>
        <position position="483"/>
    </location>
</feature>
<sequence length="718" mass="81996">MSRGYPENNNFLNNNNQMVLDMILYPLIGIPQTINWETVARLVPGLTPKECVKRFDELKSCGSSPVDNQYNPLMATGEGPVETLATYIKSSLLDTQGDFQETPVDQDTVSKAGRHSIATTRNCSSESENCTARNAGEETGESEGPNMVIHVCDEAKSLKEDFICPRDLLISEMKYFAEYLSMDAQRWEEVDISVHCDVHIFNWLIKYVKRNTKESKDCEIPALEPGNVISILISSEFLKMDSLVEQCIQYCHKNMNAIVAAPCNMNCINANLLTRIADLFTHNEIDDLKDKKDKFRSKLFCKKIERLFDPEYSNPDSRNNAATLYRCCLCKKLLTRETERRIPCIPGKINVDRHGNIIYIHIRDKTWDVHEYLNSLFEELKSWRDVYWRLWGTVNWLTCSRCYQAFLCIEFSHCQYHSEVVVYSSTVNSLNTVGTGIYPCCNQKVLRFDPTQLTKGCKVRDHMVVLHDQGENDDSPSCPPAKILDDLHKHKDVIAVPFLKDAVSDPGVGSCDEKGLEYEILLEPNTPWGSKTGELNAFLSLKNWTLQLKQQSLFSEEEEYTTGSEVTEDEVGDEEEIAKKQRKKEKPKKFTKPPKKQLSSPCSQKKEKTLEKSTSRDVSPFVVSMQKNKWDASRSLRFNQDAQREDDQRRMSEITGHLIKMRLGDLDRVKAKESKEFAGGIYSRLEAQVRASVPVTARQNSSDKNQRSKSRFGQGRPA</sequence>
<organism>
    <name type="scientific">Mus musculus</name>
    <name type="common">Mouse</name>
    <dbReference type="NCBI Taxonomy" id="10090"/>
    <lineage>
        <taxon>Eukaryota</taxon>
        <taxon>Metazoa</taxon>
        <taxon>Chordata</taxon>
        <taxon>Craniata</taxon>
        <taxon>Vertebrata</taxon>
        <taxon>Euteleostomi</taxon>
        <taxon>Mammalia</taxon>
        <taxon>Eutheria</taxon>
        <taxon>Euarchontoglires</taxon>
        <taxon>Glires</taxon>
        <taxon>Rodentia</taxon>
        <taxon>Myomorpha</taxon>
        <taxon>Muroidea</taxon>
        <taxon>Muridae</taxon>
        <taxon>Murinae</taxon>
        <taxon>Mus</taxon>
        <taxon>Mus</taxon>
    </lineage>
</organism>
<name>SANBR_MOUSE</name>
<accession>Q68FF0</accession>
<accession>A2AF87</accession>
<accession>A2AF88</accession>
<accession>A2AF89</accession>
<accession>A2AF91</accession>
<accession>A2AF92</accession>
<accession>Q3UQL0</accession>
<accession>Q6GQU5</accession>
<accession>Q6ZPH2</accession>
<accession>Q8BPK6</accession>
<accession>Q9CWA7</accession>
<keyword id="KW-0025">Alternative splicing</keyword>
<keyword id="KW-1185">Reference proteome</keyword>
<evidence type="ECO:0000250" key="1">
    <source>
        <dbReference type="UniProtKB" id="Q6NSI8"/>
    </source>
</evidence>
<evidence type="ECO:0000255" key="2">
    <source>
        <dbReference type="PROSITE-ProRule" id="PRU00037"/>
    </source>
</evidence>
<evidence type="ECO:0000255" key="3">
    <source>
        <dbReference type="PROSITE-ProRule" id="PRU00624"/>
    </source>
</evidence>
<evidence type="ECO:0000256" key="4">
    <source>
        <dbReference type="SAM" id="MobiDB-lite"/>
    </source>
</evidence>
<evidence type="ECO:0000269" key="5">
    <source>
    </source>
</evidence>
<evidence type="ECO:0000303" key="6">
    <source>
    </source>
</evidence>
<evidence type="ECO:0000305" key="7"/>
<evidence type="ECO:0000312" key="8">
    <source>
        <dbReference type="MGI" id="MGI:1918925"/>
    </source>
</evidence>
<comment type="function">
    <text evidence="5">Negatively regulates class switch recombination or isotype switching in splenic B-cells.</text>
</comment>
<comment type="subunit">
    <text evidence="5">Homodimer (PubMed:33831416). Interacts (via the BTB domain) with HDAC1 and NCOR2 (PubMed:33831416).</text>
</comment>
<comment type="alternative products">
    <event type="alternative splicing"/>
    <isoform>
        <id>Q68FF0-1</id>
        <name>1</name>
        <sequence type="displayed"/>
    </isoform>
    <isoform>
        <id>Q68FF0-2</id>
        <name>2</name>
        <sequence type="described" ref="VSP_032303"/>
    </isoform>
</comment>
<comment type="domain">
    <text evidence="5">The BTB domain is important for homodimerization and for its function in negative regulation of class switch recombination.</text>
</comment>
<comment type="similarity">
    <text evidence="7">Belongs to the KIAA1841 family.</text>
</comment>
<comment type="sequence caution" evidence="7">
    <conflict type="frameshift">
        <sequence resource="EMBL-CDS" id="AAH72622"/>
    </conflict>
</comment>
<comment type="sequence caution" evidence="7">
    <conflict type="erroneous initiation">
        <sequence resource="EMBL-CDS" id="BAC98264"/>
    </conflict>
    <text>Extended N-terminus.</text>
</comment>
<comment type="sequence caution" evidence="7">
    <conflict type="erroneous gene model prediction">
        <sequence resource="EMBL-CDS" id="CAM16941"/>
    </conflict>
</comment>
<comment type="sequence caution" evidence="7">
    <conflict type="erroneous gene model prediction">
        <sequence resource="EMBL-CDS" id="CAM16943"/>
    </conflict>
</comment>
<comment type="sequence caution" evidence="7">
    <conflict type="erroneous gene model prediction">
        <sequence resource="EMBL-CDS" id="CAM16946"/>
    </conflict>
</comment>
<reference key="1">
    <citation type="journal article" date="2003" name="DNA Res.">
        <title>Prediction of the coding sequences of mouse homologues of KIAA gene: III. The complete nucleotide sequences of 500 mouse KIAA-homologous cDNAs identified by screening of terminal sequences of cDNA clones randomly sampled from size-fractionated libraries.</title>
        <authorList>
            <person name="Okazaki N."/>
            <person name="Kikuno R."/>
            <person name="Ohara R."/>
            <person name="Inamoto S."/>
            <person name="Koseki H."/>
            <person name="Hiraoka S."/>
            <person name="Saga Y."/>
            <person name="Nagase T."/>
            <person name="Ohara O."/>
            <person name="Koga H."/>
        </authorList>
    </citation>
    <scope>NUCLEOTIDE SEQUENCE [LARGE SCALE MRNA] (ISOFORM 1)</scope>
</reference>
<reference key="2">
    <citation type="journal article" date="2009" name="PLoS Biol.">
        <title>Lineage-specific biology revealed by a finished genome assembly of the mouse.</title>
        <authorList>
            <person name="Church D.M."/>
            <person name="Goodstadt L."/>
            <person name="Hillier L.W."/>
            <person name="Zody M.C."/>
            <person name="Goldstein S."/>
            <person name="She X."/>
            <person name="Bult C.J."/>
            <person name="Agarwala R."/>
            <person name="Cherry J.L."/>
            <person name="DiCuccio M."/>
            <person name="Hlavina W."/>
            <person name="Kapustin Y."/>
            <person name="Meric P."/>
            <person name="Maglott D."/>
            <person name="Birtle Z."/>
            <person name="Marques A.C."/>
            <person name="Graves T."/>
            <person name="Zhou S."/>
            <person name="Teague B."/>
            <person name="Potamousis K."/>
            <person name="Churas C."/>
            <person name="Place M."/>
            <person name="Herschleb J."/>
            <person name="Runnheim R."/>
            <person name="Forrest D."/>
            <person name="Amos-Landgraf J."/>
            <person name="Schwartz D.C."/>
            <person name="Cheng Z."/>
            <person name="Lindblad-Toh K."/>
            <person name="Eichler E.E."/>
            <person name="Ponting C.P."/>
        </authorList>
    </citation>
    <scope>NUCLEOTIDE SEQUENCE [LARGE SCALE GENOMIC DNA]</scope>
    <source>
        <strain>C57BL/6J</strain>
    </source>
</reference>
<reference key="3">
    <citation type="journal article" date="2004" name="Genome Res.">
        <title>The status, quality, and expansion of the NIH full-length cDNA project: the Mammalian Gene Collection (MGC).</title>
        <authorList>
            <consortium name="The MGC Project Team"/>
        </authorList>
    </citation>
    <scope>NUCLEOTIDE SEQUENCE [LARGE SCALE MRNA] (ISOFORM 1)</scope>
    <source>
        <strain>C57BL/6J</strain>
        <tissue>Brain</tissue>
    </source>
</reference>
<reference key="4">
    <citation type="journal article" date="2005" name="Science">
        <title>The transcriptional landscape of the mammalian genome.</title>
        <authorList>
            <person name="Carninci P."/>
            <person name="Kasukawa T."/>
            <person name="Katayama S."/>
            <person name="Gough J."/>
            <person name="Frith M.C."/>
            <person name="Maeda N."/>
            <person name="Oyama R."/>
            <person name="Ravasi T."/>
            <person name="Lenhard B."/>
            <person name="Wells C."/>
            <person name="Kodzius R."/>
            <person name="Shimokawa K."/>
            <person name="Bajic V.B."/>
            <person name="Brenner S.E."/>
            <person name="Batalov S."/>
            <person name="Forrest A.R."/>
            <person name="Zavolan M."/>
            <person name="Davis M.J."/>
            <person name="Wilming L.G."/>
            <person name="Aidinis V."/>
            <person name="Allen J.E."/>
            <person name="Ambesi-Impiombato A."/>
            <person name="Apweiler R."/>
            <person name="Aturaliya R.N."/>
            <person name="Bailey T.L."/>
            <person name="Bansal M."/>
            <person name="Baxter L."/>
            <person name="Beisel K.W."/>
            <person name="Bersano T."/>
            <person name="Bono H."/>
            <person name="Chalk A.M."/>
            <person name="Chiu K.P."/>
            <person name="Choudhary V."/>
            <person name="Christoffels A."/>
            <person name="Clutterbuck D.R."/>
            <person name="Crowe M.L."/>
            <person name="Dalla E."/>
            <person name="Dalrymple B.P."/>
            <person name="de Bono B."/>
            <person name="Della Gatta G."/>
            <person name="di Bernardo D."/>
            <person name="Down T."/>
            <person name="Engstrom P."/>
            <person name="Fagiolini M."/>
            <person name="Faulkner G."/>
            <person name="Fletcher C.F."/>
            <person name="Fukushima T."/>
            <person name="Furuno M."/>
            <person name="Futaki S."/>
            <person name="Gariboldi M."/>
            <person name="Georgii-Hemming P."/>
            <person name="Gingeras T.R."/>
            <person name="Gojobori T."/>
            <person name="Green R.E."/>
            <person name="Gustincich S."/>
            <person name="Harbers M."/>
            <person name="Hayashi Y."/>
            <person name="Hensch T.K."/>
            <person name="Hirokawa N."/>
            <person name="Hill D."/>
            <person name="Huminiecki L."/>
            <person name="Iacono M."/>
            <person name="Ikeo K."/>
            <person name="Iwama A."/>
            <person name="Ishikawa T."/>
            <person name="Jakt M."/>
            <person name="Kanapin A."/>
            <person name="Katoh M."/>
            <person name="Kawasawa Y."/>
            <person name="Kelso J."/>
            <person name="Kitamura H."/>
            <person name="Kitano H."/>
            <person name="Kollias G."/>
            <person name="Krishnan S.P."/>
            <person name="Kruger A."/>
            <person name="Kummerfeld S.K."/>
            <person name="Kurochkin I.V."/>
            <person name="Lareau L.F."/>
            <person name="Lazarevic D."/>
            <person name="Lipovich L."/>
            <person name="Liu J."/>
            <person name="Liuni S."/>
            <person name="McWilliam S."/>
            <person name="Madan Babu M."/>
            <person name="Madera M."/>
            <person name="Marchionni L."/>
            <person name="Matsuda H."/>
            <person name="Matsuzawa S."/>
            <person name="Miki H."/>
            <person name="Mignone F."/>
            <person name="Miyake S."/>
            <person name="Morris K."/>
            <person name="Mottagui-Tabar S."/>
            <person name="Mulder N."/>
            <person name="Nakano N."/>
            <person name="Nakauchi H."/>
            <person name="Ng P."/>
            <person name="Nilsson R."/>
            <person name="Nishiguchi S."/>
            <person name="Nishikawa S."/>
            <person name="Nori F."/>
            <person name="Ohara O."/>
            <person name="Okazaki Y."/>
            <person name="Orlando V."/>
            <person name="Pang K.C."/>
            <person name="Pavan W.J."/>
            <person name="Pavesi G."/>
            <person name="Pesole G."/>
            <person name="Petrovsky N."/>
            <person name="Piazza S."/>
            <person name="Reed J."/>
            <person name="Reid J.F."/>
            <person name="Ring B.Z."/>
            <person name="Ringwald M."/>
            <person name="Rost B."/>
            <person name="Ruan Y."/>
            <person name="Salzberg S.L."/>
            <person name="Sandelin A."/>
            <person name="Schneider C."/>
            <person name="Schoenbach C."/>
            <person name="Sekiguchi K."/>
            <person name="Semple C.A."/>
            <person name="Seno S."/>
            <person name="Sessa L."/>
            <person name="Sheng Y."/>
            <person name="Shibata Y."/>
            <person name="Shimada H."/>
            <person name="Shimada K."/>
            <person name="Silva D."/>
            <person name="Sinclair B."/>
            <person name="Sperling S."/>
            <person name="Stupka E."/>
            <person name="Sugiura K."/>
            <person name="Sultana R."/>
            <person name="Takenaka Y."/>
            <person name="Taki K."/>
            <person name="Tammoja K."/>
            <person name="Tan S.L."/>
            <person name="Tang S."/>
            <person name="Taylor M.S."/>
            <person name="Tegner J."/>
            <person name="Teichmann S.A."/>
            <person name="Ueda H.R."/>
            <person name="van Nimwegen E."/>
            <person name="Verardo R."/>
            <person name="Wei C.L."/>
            <person name="Yagi K."/>
            <person name="Yamanishi H."/>
            <person name="Zabarovsky E."/>
            <person name="Zhu S."/>
            <person name="Zimmer A."/>
            <person name="Hide W."/>
            <person name="Bult C."/>
            <person name="Grimmond S.M."/>
            <person name="Teasdale R.D."/>
            <person name="Liu E.T."/>
            <person name="Brusic V."/>
            <person name="Quackenbush J."/>
            <person name="Wahlestedt C."/>
            <person name="Mattick J.S."/>
            <person name="Hume D.A."/>
            <person name="Kai C."/>
            <person name="Sasaki D."/>
            <person name="Tomaru Y."/>
            <person name="Fukuda S."/>
            <person name="Kanamori-Katayama M."/>
            <person name="Suzuki M."/>
            <person name="Aoki J."/>
            <person name="Arakawa T."/>
            <person name="Iida J."/>
            <person name="Imamura K."/>
            <person name="Itoh M."/>
            <person name="Kato T."/>
            <person name="Kawaji H."/>
            <person name="Kawagashira N."/>
            <person name="Kawashima T."/>
            <person name="Kojima M."/>
            <person name="Kondo S."/>
            <person name="Konno H."/>
            <person name="Nakano K."/>
            <person name="Ninomiya N."/>
            <person name="Nishio T."/>
            <person name="Okada M."/>
            <person name="Plessy C."/>
            <person name="Shibata K."/>
            <person name="Shiraki T."/>
            <person name="Suzuki S."/>
            <person name="Tagami M."/>
            <person name="Waki K."/>
            <person name="Watahiki A."/>
            <person name="Okamura-Oho Y."/>
            <person name="Suzuki H."/>
            <person name="Kawai J."/>
            <person name="Hayashizaki Y."/>
        </authorList>
    </citation>
    <scope>NUCLEOTIDE SEQUENCE [LARGE SCALE MRNA] OF 1-335 AND 536-718 (ISOFORM 2)</scope>
    <source>
        <strain>C57BL/6J</strain>
        <tissue>Eye</tissue>
        <tissue>Heart</tissue>
        <tissue>Kidney</tissue>
    </source>
</reference>
<reference key="5">
    <citation type="journal article" date="2010" name="Cell">
        <title>A tissue-specific atlas of mouse protein phosphorylation and expression.</title>
        <authorList>
            <person name="Huttlin E.L."/>
            <person name="Jedrychowski M.P."/>
            <person name="Elias J.E."/>
            <person name="Goswami T."/>
            <person name="Rad R."/>
            <person name="Beausoleil S.A."/>
            <person name="Villen J."/>
            <person name="Haas W."/>
            <person name="Sowa M.E."/>
            <person name="Gygi S.P."/>
        </authorList>
    </citation>
    <scope>IDENTIFICATION BY MASS SPECTROMETRY [LARGE SCALE ANALYSIS]</scope>
    <source>
        <tissue>Brain</tissue>
    </source>
</reference>
<reference key="6">
    <citation type="journal article" date="2021" name="J. Biol. Chem.">
        <title>The uncharacterized SANT and BTB domain-containing protein SANBR inhibits class switch recombination.</title>
        <authorList>
            <person name="Zheng S."/>
            <person name="Matthews A.J."/>
            <person name="Rahman N."/>
            <person name="Herrick-Reynolds K."/>
            <person name="Sible E."/>
            <person name="Choi J.E."/>
            <person name="Wishnie A."/>
            <person name="Ng Y.K."/>
            <person name="Rhodes D."/>
            <person name="Elledge S.J."/>
            <person name="Vuong B.Q."/>
        </authorList>
    </citation>
    <scope>FUNCTION</scope>
    <scope>SUBUNIT</scope>
    <scope>DOMAIN</scope>
    <scope>INTERACTION WITH HDAC1 AND NCOR2</scope>
</reference>